<feature type="chain" id="PRO_1000079170" description="Probable GTP-binding protein EngB">
    <location>
        <begin position="1"/>
        <end position="210"/>
    </location>
</feature>
<feature type="domain" description="EngB-type G" evidence="1">
    <location>
        <begin position="25"/>
        <end position="199"/>
    </location>
</feature>
<feature type="binding site" evidence="1">
    <location>
        <begin position="33"/>
        <end position="40"/>
    </location>
    <ligand>
        <name>GTP</name>
        <dbReference type="ChEBI" id="CHEBI:37565"/>
    </ligand>
</feature>
<feature type="binding site" evidence="1">
    <location>
        <position position="40"/>
    </location>
    <ligand>
        <name>Mg(2+)</name>
        <dbReference type="ChEBI" id="CHEBI:18420"/>
    </ligand>
</feature>
<feature type="binding site" evidence="1">
    <location>
        <begin position="60"/>
        <end position="64"/>
    </location>
    <ligand>
        <name>GTP</name>
        <dbReference type="ChEBI" id="CHEBI:37565"/>
    </ligand>
</feature>
<feature type="binding site" evidence="1">
    <location>
        <position position="62"/>
    </location>
    <ligand>
        <name>Mg(2+)</name>
        <dbReference type="ChEBI" id="CHEBI:18420"/>
    </ligand>
</feature>
<feature type="binding site" evidence="1">
    <location>
        <begin position="78"/>
        <end position="81"/>
    </location>
    <ligand>
        <name>GTP</name>
        <dbReference type="ChEBI" id="CHEBI:37565"/>
    </ligand>
</feature>
<feature type="binding site" evidence="1">
    <location>
        <begin position="145"/>
        <end position="148"/>
    </location>
    <ligand>
        <name>GTP</name>
        <dbReference type="ChEBI" id="CHEBI:37565"/>
    </ligand>
</feature>
<feature type="binding site" evidence="1">
    <location>
        <begin position="178"/>
        <end position="180"/>
    </location>
    <ligand>
        <name>GTP</name>
        <dbReference type="ChEBI" id="CHEBI:37565"/>
    </ligand>
</feature>
<reference key="1">
    <citation type="submission" date="2008-02" db="EMBL/GenBank/DDBJ databases">
        <title>Complete sequence of Escherichia coli C str. ATCC 8739.</title>
        <authorList>
            <person name="Copeland A."/>
            <person name="Lucas S."/>
            <person name="Lapidus A."/>
            <person name="Glavina del Rio T."/>
            <person name="Dalin E."/>
            <person name="Tice H."/>
            <person name="Bruce D."/>
            <person name="Goodwin L."/>
            <person name="Pitluck S."/>
            <person name="Kiss H."/>
            <person name="Brettin T."/>
            <person name="Detter J.C."/>
            <person name="Han C."/>
            <person name="Kuske C.R."/>
            <person name="Schmutz J."/>
            <person name="Larimer F."/>
            <person name="Land M."/>
            <person name="Hauser L."/>
            <person name="Kyrpides N."/>
            <person name="Mikhailova N."/>
            <person name="Ingram L."/>
            <person name="Richardson P."/>
        </authorList>
    </citation>
    <scope>NUCLEOTIDE SEQUENCE [LARGE SCALE GENOMIC DNA]</scope>
    <source>
        <strain>ATCC 8739 / DSM 1576 / NBRC 3972 / NCIMB 8545 / WDCM 00012 / Crooks</strain>
    </source>
</reference>
<gene>
    <name evidence="1" type="primary">engB</name>
    <name type="ordered locus">EcolC_4151</name>
</gene>
<name>ENGB_ECOLC</name>
<organism>
    <name type="scientific">Escherichia coli (strain ATCC 8739 / DSM 1576 / NBRC 3972 / NCIMB 8545 / WDCM 00012 / Crooks)</name>
    <dbReference type="NCBI Taxonomy" id="481805"/>
    <lineage>
        <taxon>Bacteria</taxon>
        <taxon>Pseudomonadati</taxon>
        <taxon>Pseudomonadota</taxon>
        <taxon>Gammaproteobacteria</taxon>
        <taxon>Enterobacterales</taxon>
        <taxon>Enterobacteriaceae</taxon>
        <taxon>Escherichia</taxon>
    </lineage>
</organism>
<protein>
    <recommendedName>
        <fullName evidence="1">Probable GTP-binding protein EngB</fullName>
    </recommendedName>
</protein>
<evidence type="ECO:0000255" key="1">
    <source>
        <dbReference type="HAMAP-Rule" id="MF_00321"/>
    </source>
</evidence>
<accession>B1IW48</accession>
<comment type="function">
    <text evidence="1">Necessary for normal cell division and for the maintenance of normal septation.</text>
</comment>
<comment type="cofactor">
    <cofactor evidence="1">
        <name>Mg(2+)</name>
        <dbReference type="ChEBI" id="CHEBI:18420"/>
    </cofactor>
</comment>
<comment type="similarity">
    <text evidence="1">Belongs to the TRAFAC class TrmE-Era-EngA-EngB-Septin-like GTPase superfamily. EngB GTPase family.</text>
</comment>
<dbReference type="EMBL" id="CP000946">
    <property type="protein sequence ID" value="ACA79748.1"/>
    <property type="molecule type" value="Genomic_DNA"/>
</dbReference>
<dbReference type="SMR" id="B1IW48"/>
<dbReference type="KEGG" id="ecl:EcolC_4151"/>
<dbReference type="HOGENOM" id="CLU_033732_1_2_6"/>
<dbReference type="GO" id="GO:0005829">
    <property type="term" value="C:cytosol"/>
    <property type="evidence" value="ECO:0007669"/>
    <property type="project" value="TreeGrafter"/>
</dbReference>
<dbReference type="GO" id="GO:0005525">
    <property type="term" value="F:GTP binding"/>
    <property type="evidence" value="ECO:0007669"/>
    <property type="project" value="UniProtKB-UniRule"/>
</dbReference>
<dbReference type="GO" id="GO:0046872">
    <property type="term" value="F:metal ion binding"/>
    <property type="evidence" value="ECO:0007669"/>
    <property type="project" value="UniProtKB-KW"/>
</dbReference>
<dbReference type="GO" id="GO:0000917">
    <property type="term" value="P:division septum assembly"/>
    <property type="evidence" value="ECO:0007669"/>
    <property type="project" value="UniProtKB-KW"/>
</dbReference>
<dbReference type="CDD" id="cd01876">
    <property type="entry name" value="YihA_EngB"/>
    <property type="match status" value="1"/>
</dbReference>
<dbReference type="FunFam" id="3.40.50.300:FF:000098">
    <property type="entry name" value="Probable GTP-binding protein EngB"/>
    <property type="match status" value="1"/>
</dbReference>
<dbReference type="Gene3D" id="3.40.50.300">
    <property type="entry name" value="P-loop containing nucleotide triphosphate hydrolases"/>
    <property type="match status" value="1"/>
</dbReference>
<dbReference type="HAMAP" id="MF_00321">
    <property type="entry name" value="GTPase_EngB"/>
    <property type="match status" value="1"/>
</dbReference>
<dbReference type="InterPro" id="IPR030393">
    <property type="entry name" value="G_ENGB_dom"/>
</dbReference>
<dbReference type="InterPro" id="IPR006073">
    <property type="entry name" value="GTP-bd"/>
</dbReference>
<dbReference type="InterPro" id="IPR019987">
    <property type="entry name" value="GTP-bd_ribosome_bio_YsxC"/>
</dbReference>
<dbReference type="InterPro" id="IPR027417">
    <property type="entry name" value="P-loop_NTPase"/>
</dbReference>
<dbReference type="NCBIfam" id="TIGR03598">
    <property type="entry name" value="GTPase_YsxC"/>
    <property type="match status" value="1"/>
</dbReference>
<dbReference type="PANTHER" id="PTHR11649:SF13">
    <property type="entry name" value="ENGB-TYPE G DOMAIN-CONTAINING PROTEIN"/>
    <property type="match status" value="1"/>
</dbReference>
<dbReference type="PANTHER" id="PTHR11649">
    <property type="entry name" value="MSS1/TRME-RELATED GTP-BINDING PROTEIN"/>
    <property type="match status" value="1"/>
</dbReference>
<dbReference type="Pfam" id="PF01926">
    <property type="entry name" value="MMR_HSR1"/>
    <property type="match status" value="1"/>
</dbReference>
<dbReference type="SUPFAM" id="SSF52540">
    <property type="entry name" value="P-loop containing nucleoside triphosphate hydrolases"/>
    <property type="match status" value="1"/>
</dbReference>
<dbReference type="PROSITE" id="PS51706">
    <property type="entry name" value="G_ENGB"/>
    <property type="match status" value="1"/>
</dbReference>
<sequence>MTNLNYQQTHFVMSAPDIRHLPSDTGIEVAFAGRSNAGKSSALNTLTNQKSLARTSKTPGRTQLINLFEVADGKRLVDLPGYGYAEVPEEMKRKWQRALGEYLEKRQSLQGLVVLMDIRHPLKDLDQQMIEWAVDSNIAVLVLLTKADKLASGARKAQLNMVREAVLAFNGDVQVETFSSLKKQGVDKLRQKLDTWFSEMQPVEETQDGE</sequence>
<proteinExistence type="inferred from homology"/>
<keyword id="KW-0131">Cell cycle</keyword>
<keyword id="KW-0132">Cell division</keyword>
<keyword id="KW-0342">GTP-binding</keyword>
<keyword id="KW-0460">Magnesium</keyword>
<keyword id="KW-0479">Metal-binding</keyword>
<keyword id="KW-0547">Nucleotide-binding</keyword>
<keyword id="KW-0717">Septation</keyword>